<accession>C1AI45</accession>
<keyword id="KW-0067">ATP-binding</keyword>
<keyword id="KW-0227">DNA damage</keyword>
<keyword id="KW-0234">DNA repair</keyword>
<keyword id="KW-0238">DNA-binding</keyword>
<keyword id="KW-0460">Magnesium</keyword>
<keyword id="KW-0547">Nucleotide-binding</keyword>
<keyword id="KW-0548">Nucleotidyltransferase</keyword>
<keyword id="KW-0808">Transferase</keyword>
<reference key="1">
    <citation type="journal article" date="2009" name="Vaccine">
        <title>Whole genome sequence analysis of Mycobacterium bovis bacillus Calmette-Guerin (BCG) Tokyo 172: a comparative study of BCG vaccine substrains.</title>
        <authorList>
            <person name="Seki M."/>
            <person name="Honda I."/>
            <person name="Fujita I."/>
            <person name="Yano I."/>
            <person name="Yamamoto S."/>
            <person name="Koyama A."/>
        </authorList>
    </citation>
    <scope>NUCLEOTIDE SEQUENCE [LARGE SCALE GENOMIC DNA]</scope>
    <source>
        <strain>BCG / Tokyo 172 / ATCC 35737 / TMC 1019</strain>
    </source>
</reference>
<comment type="function">
    <text evidence="1">Participates in a DNA-damage check-point. DisA forms globular foci that rapidly scan along the chromosomes searching for lesions.</text>
</comment>
<comment type="function">
    <text evidence="1">Also has diadenylate cyclase activity, catalyzing the condensation of 2 ATP molecules into cyclic di-AMP (c-di-AMP). c-di-AMP likely acts as a signaling molecule that may couple DNA integrity with a cellular process.</text>
</comment>
<comment type="catalytic activity">
    <reaction evidence="1">
        <text>2 ATP = 3',3'-c-di-AMP + 2 diphosphate</text>
        <dbReference type="Rhea" id="RHEA:35655"/>
        <dbReference type="ChEBI" id="CHEBI:30616"/>
        <dbReference type="ChEBI" id="CHEBI:33019"/>
        <dbReference type="ChEBI" id="CHEBI:71500"/>
        <dbReference type="EC" id="2.7.7.85"/>
    </reaction>
</comment>
<comment type="cofactor">
    <cofactor evidence="1">
        <name>Mg(2+)</name>
        <dbReference type="ChEBI" id="CHEBI:18420"/>
    </cofactor>
</comment>
<comment type="subunit">
    <text evidence="1">Homooctamer.</text>
</comment>
<comment type="similarity">
    <text evidence="1">Belongs to the DisA family.</text>
</comment>
<dbReference type="EC" id="2.7.7.85" evidence="1"/>
<dbReference type="EMBL" id="AP010918">
    <property type="protein sequence ID" value="BAH27924.1"/>
    <property type="molecule type" value="Genomic_DNA"/>
</dbReference>
<dbReference type="RefSeq" id="WP_010950916.1">
    <property type="nucleotide sequence ID" value="NZ_CP014566.1"/>
</dbReference>
<dbReference type="SMR" id="C1AI45"/>
<dbReference type="KEGG" id="mbt:JTY_3652"/>
<dbReference type="HOGENOM" id="CLU_787128_0_0_11"/>
<dbReference type="GO" id="GO:0004016">
    <property type="term" value="F:adenylate cyclase activity"/>
    <property type="evidence" value="ECO:0007669"/>
    <property type="project" value="TreeGrafter"/>
</dbReference>
<dbReference type="GO" id="GO:0005524">
    <property type="term" value="F:ATP binding"/>
    <property type="evidence" value="ECO:0007669"/>
    <property type="project" value="UniProtKB-UniRule"/>
</dbReference>
<dbReference type="GO" id="GO:0106408">
    <property type="term" value="F:diadenylate cyclase activity"/>
    <property type="evidence" value="ECO:0007669"/>
    <property type="project" value="UniProtKB-EC"/>
</dbReference>
<dbReference type="GO" id="GO:0003677">
    <property type="term" value="F:DNA binding"/>
    <property type="evidence" value="ECO:0007669"/>
    <property type="project" value="UniProtKB-UniRule"/>
</dbReference>
<dbReference type="GO" id="GO:0006281">
    <property type="term" value="P:DNA repair"/>
    <property type="evidence" value="ECO:0007669"/>
    <property type="project" value="UniProtKB-UniRule"/>
</dbReference>
<dbReference type="FunFam" id="1.10.150.20:FF:000016">
    <property type="entry name" value="DNA integrity scanning protein DisA"/>
    <property type="match status" value="1"/>
</dbReference>
<dbReference type="FunFam" id="1.20.1260.110:FF:000002">
    <property type="entry name" value="DNA integrity scanning protein DisA"/>
    <property type="match status" value="1"/>
</dbReference>
<dbReference type="FunFam" id="3.40.1700.10:FF:000001">
    <property type="entry name" value="DNA integrity scanning protein DisA"/>
    <property type="match status" value="1"/>
</dbReference>
<dbReference type="Gene3D" id="1.10.150.20">
    <property type="entry name" value="5' to 3' exonuclease, C-terminal subdomain"/>
    <property type="match status" value="1"/>
</dbReference>
<dbReference type="Gene3D" id="1.20.1260.110">
    <property type="entry name" value="DNA integrity scanning linker region"/>
    <property type="match status" value="1"/>
</dbReference>
<dbReference type="Gene3D" id="3.40.1700.10">
    <property type="entry name" value="DNA integrity scanning protein, DisA, N-terminal domain"/>
    <property type="match status" value="1"/>
</dbReference>
<dbReference type="HAMAP" id="MF_01438">
    <property type="entry name" value="DisA"/>
    <property type="match status" value="1"/>
</dbReference>
<dbReference type="InterPro" id="IPR050338">
    <property type="entry name" value="DisA"/>
</dbReference>
<dbReference type="InterPro" id="IPR038331">
    <property type="entry name" value="DisA_sf"/>
</dbReference>
<dbReference type="InterPro" id="IPR036888">
    <property type="entry name" value="DNA_integrity_DisA_N_sf"/>
</dbReference>
<dbReference type="InterPro" id="IPR018906">
    <property type="entry name" value="DNA_integrity_scan_DisA_link"/>
</dbReference>
<dbReference type="InterPro" id="IPR003390">
    <property type="entry name" value="DNA_integrity_scan_DisA_N"/>
</dbReference>
<dbReference type="InterPro" id="IPR023763">
    <property type="entry name" value="DNA_integrity_scanning_protein"/>
</dbReference>
<dbReference type="InterPro" id="IPR010994">
    <property type="entry name" value="RuvA_2-like"/>
</dbReference>
<dbReference type="NCBIfam" id="NF010009">
    <property type="entry name" value="PRK13482.1"/>
    <property type="match status" value="1"/>
</dbReference>
<dbReference type="PANTHER" id="PTHR34185">
    <property type="entry name" value="DIADENYLATE CYCLASE"/>
    <property type="match status" value="1"/>
</dbReference>
<dbReference type="PANTHER" id="PTHR34185:SF3">
    <property type="entry name" value="DNA INTEGRITY SCANNING PROTEIN DISA"/>
    <property type="match status" value="1"/>
</dbReference>
<dbReference type="Pfam" id="PF02457">
    <property type="entry name" value="DAC"/>
    <property type="match status" value="1"/>
</dbReference>
<dbReference type="Pfam" id="PF10635">
    <property type="entry name" value="DisA-linker"/>
    <property type="match status" value="1"/>
</dbReference>
<dbReference type="SUPFAM" id="SSF47781">
    <property type="entry name" value="RuvA domain 2-like"/>
    <property type="match status" value="1"/>
</dbReference>
<dbReference type="SUPFAM" id="SSF143597">
    <property type="entry name" value="YojJ-like"/>
    <property type="match status" value="1"/>
</dbReference>
<dbReference type="PROSITE" id="PS51794">
    <property type="entry name" value="DAC"/>
    <property type="match status" value="1"/>
</dbReference>
<protein>
    <recommendedName>
        <fullName evidence="1">DNA integrity scanning protein DisA</fullName>
    </recommendedName>
    <alternativeName>
        <fullName evidence="1">Cyclic di-AMP synthase</fullName>
        <shortName evidence="1">c-di-AMP synthase</shortName>
    </alternativeName>
    <alternativeName>
        <fullName evidence="1">Diadenylate cyclase</fullName>
        <ecNumber evidence="1">2.7.7.85</ecNumber>
    </alternativeName>
</protein>
<proteinExistence type="inferred from homology"/>
<name>DISA_MYCBT</name>
<gene>
    <name evidence="1" type="primary">disA</name>
    <name type="ordered locus">JTY_3652</name>
</gene>
<sequence length="358" mass="38987">MHAVTRPTLREAVARLAPGTGLRDGLERILRGRTGALIVLGHDENVEAICDGGFSLDVRYAATRLRELCKMDGAVVLSTDGSRIVRANVQLVPDPSIPTDESGTRHRSAERAAIQTGYPVISVSHSMNIVTVYVRGERHVLTDSATILSRANQAIATLERYKTRLDEVSRQLSRAEIEDFVTLRDVMTVVQRLELVRRIGLVIDYDVVELGTDGRQLRLQLDELLGGNDTARELIVRDYHANPEPPSTGQINATLDELDALSDGDLLDFTALAKVFGYPTTTEAQDSALSPRGYRAMAGIPRLQFAHADLLVRAFGTLQGLLAASAGDLQSVDGIGAMWARHVRDGLSQLAESTISDQ</sequence>
<organism>
    <name type="scientific">Mycobacterium bovis (strain BCG / Tokyo 172 / ATCC 35737 / TMC 1019)</name>
    <dbReference type="NCBI Taxonomy" id="561275"/>
    <lineage>
        <taxon>Bacteria</taxon>
        <taxon>Bacillati</taxon>
        <taxon>Actinomycetota</taxon>
        <taxon>Actinomycetes</taxon>
        <taxon>Mycobacteriales</taxon>
        <taxon>Mycobacteriaceae</taxon>
        <taxon>Mycobacterium</taxon>
        <taxon>Mycobacterium tuberculosis complex</taxon>
    </lineage>
</organism>
<evidence type="ECO:0000255" key="1">
    <source>
        <dbReference type="HAMAP-Rule" id="MF_01438"/>
    </source>
</evidence>
<evidence type="ECO:0000255" key="2">
    <source>
        <dbReference type="PROSITE-ProRule" id="PRU01130"/>
    </source>
</evidence>
<feature type="chain" id="PRO_1000184912" description="DNA integrity scanning protein DisA">
    <location>
        <begin position="1"/>
        <end position="358"/>
    </location>
</feature>
<feature type="domain" description="DAC" evidence="2">
    <location>
        <begin position="6"/>
        <end position="144"/>
    </location>
</feature>
<feature type="binding site" evidence="1">
    <location>
        <position position="73"/>
    </location>
    <ligand>
        <name>ATP</name>
        <dbReference type="ChEBI" id="CHEBI:30616"/>
    </ligand>
</feature>
<feature type="binding site" evidence="1">
    <location>
        <position position="91"/>
    </location>
    <ligand>
        <name>ATP</name>
        <dbReference type="ChEBI" id="CHEBI:30616"/>
    </ligand>
</feature>
<feature type="binding site" evidence="1">
    <location>
        <begin position="104"/>
        <end position="108"/>
    </location>
    <ligand>
        <name>ATP</name>
        <dbReference type="ChEBI" id="CHEBI:30616"/>
    </ligand>
</feature>